<name>DSC2_HUMAN</name>
<gene>
    <name evidence="25" type="primary">DSC2</name>
    <name type="synonym">CDHF2</name>
    <name type="synonym">DSC3</name>
</gene>
<evidence type="ECO:0000250" key="1">
    <source>
        <dbReference type="UniProtKB" id="P55292"/>
    </source>
</evidence>
<evidence type="ECO:0000255" key="2"/>
<evidence type="ECO:0000255" key="3">
    <source>
        <dbReference type="PROSITE-ProRule" id="PRU00043"/>
    </source>
</evidence>
<evidence type="ECO:0000269" key="4">
    <source>
    </source>
</evidence>
<evidence type="ECO:0000269" key="5">
    <source>
    </source>
</evidence>
<evidence type="ECO:0000269" key="6">
    <source>
    </source>
</evidence>
<evidence type="ECO:0000269" key="7">
    <source>
    </source>
</evidence>
<evidence type="ECO:0000269" key="8">
    <source>
    </source>
</evidence>
<evidence type="ECO:0000269" key="9">
    <source>
    </source>
</evidence>
<evidence type="ECO:0000269" key="10">
    <source>
    </source>
</evidence>
<evidence type="ECO:0000269" key="11">
    <source>
    </source>
</evidence>
<evidence type="ECO:0000269" key="12">
    <source>
    </source>
</evidence>
<evidence type="ECO:0000269" key="13">
    <source>
    </source>
</evidence>
<evidence type="ECO:0000269" key="14">
    <source>
    </source>
</evidence>
<evidence type="ECO:0000269" key="15">
    <source>
    </source>
</evidence>
<evidence type="ECO:0000269" key="16">
    <source>
    </source>
</evidence>
<evidence type="ECO:0000269" key="17">
    <source>
    </source>
</evidence>
<evidence type="ECO:0000269" key="18">
    <source>
    </source>
</evidence>
<evidence type="ECO:0000269" key="19">
    <source>
    </source>
</evidence>
<evidence type="ECO:0000269" key="20">
    <source>
    </source>
</evidence>
<evidence type="ECO:0000269" key="21">
    <source>
    </source>
</evidence>
<evidence type="ECO:0000303" key="22">
    <source>
    </source>
</evidence>
<evidence type="ECO:0000303" key="23">
    <source>
    </source>
</evidence>
<evidence type="ECO:0000305" key="24"/>
<evidence type="ECO:0000312" key="25">
    <source>
        <dbReference type="HGNC" id="HGNC:3036"/>
    </source>
</evidence>
<evidence type="ECO:0007744" key="26">
    <source>
    </source>
</evidence>
<evidence type="ECO:0007829" key="27">
    <source>
        <dbReference type="PDB" id="5ERP"/>
    </source>
</evidence>
<evidence type="ECO:0007829" key="28">
    <source>
        <dbReference type="PDB" id="5J5J"/>
    </source>
</evidence>
<accession>Q02487</accession>
<organism>
    <name type="scientific">Homo sapiens</name>
    <name type="common">Human</name>
    <dbReference type="NCBI Taxonomy" id="9606"/>
    <lineage>
        <taxon>Eukaryota</taxon>
        <taxon>Metazoa</taxon>
        <taxon>Chordata</taxon>
        <taxon>Craniata</taxon>
        <taxon>Vertebrata</taxon>
        <taxon>Euteleostomi</taxon>
        <taxon>Mammalia</taxon>
        <taxon>Eutheria</taxon>
        <taxon>Euarchontoglires</taxon>
        <taxon>Primates</taxon>
        <taxon>Haplorrhini</taxon>
        <taxon>Catarrhini</taxon>
        <taxon>Hominidae</taxon>
        <taxon>Homo</taxon>
    </lineage>
</organism>
<protein>
    <recommendedName>
        <fullName evidence="23">Desmocollin-2</fullName>
    </recommendedName>
    <alternativeName>
        <fullName>Cadherin family member 2</fullName>
    </alternativeName>
    <alternativeName>
        <fullName>Desmocollin-3</fullName>
    </alternativeName>
    <alternativeName>
        <fullName>Desmosomal glycoprotein II</fullName>
    </alternativeName>
    <alternativeName>
        <fullName>Desmosomal glycoprotein III</fullName>
    </alternativeName>
</protein>
<keyword id="KW-0002">3D-structure</keyword>
<keyword id="KW-0025">Alternative splicing</keyword>
<keyword id="KW-0106">Calcium</keyword>
<keyword id="KW-0122">Cardiomyopathy</keyword>
<keyword id="KW-0130">Cell adhesion</keyword>
<keyword id="KW-0965">Cell junction</keyword>
<keyword id="KW-1003">Cell membrane</keyword>
<keyword id="KW-0165">Cleavage on pair of basic residues</keyword>
<keyword id="KW-0225">Disease variant</keyword>
<keyword id="KW-0325">Glycoprotein</keyword>
<keyword id="KW-0472">Membrane</keyword>
<keyword id="KW-0479">Metal-binding</keyword>
<keyword id="KW-0597">Phosphoprotein</keyword>
<keyword id="KW-1267">Proteomics identification</keyword>
<keyword id="KW-1185">Reference proteome</keyword>
<keyword id="KW-0677">Repeat</keyword>
<keyword id="KW-0732">Signal</keyword>
<keyword id="KW-0812">Transmembrane</keyword>
<keyword id="KW-1133">Transmembrane helix</keyword>
<dbReference type="EMBL" id="X56807">
    <property type="protein sequence ID" value="CAA40141.1"/>
    <property type="status" value="ALT_INIT"/>
    <property type="molecule type" value="mRNA"/>
</dbReference>
<dbReference type="EMBL" id="X56807">
    <property type="protein sequence ID" value="CAA40142.1"/>
    <property type="status" value="ALT_INIT"/>
    <property type="molecule type" value="mRNA"/>
</dbReference>
<dbReference type="EMBL" id="BC063291">
    <property type="protein sequence ID" value="AAH63291.1"/>
    <property type="molecule type" value="mRNA"/>
</dbReference>
<dbReference type="CCDS" id="CCDS11892.1">
    <molecule id="Q02487-1"/>
</dbReference>
<dbReference type="CCDS" id="CCDS11893.1">
    <molecule id="Q02487-2"/>
</dbReference>
<dbReference type="PIR" id="A40390">
    <property type="entry name" value="IJHUDB"/>
</dbReference>
<dbReference type="PIR" id="B40390">
    <property type="entry name" value="IJHUDA"/>
</dbReference>
<dbReference type="RefSeq" id="NP_004940.1">
    <molecule id="Q02487-2"/>
    <property type="nucleotide sequence ID" value="NM_004949.5"/>
</dbReference>
<dbReference type="RefSeq" id="NP_077740.1">
    <molecule id="Q02487-1"/>
    <property type="nucleotide sequence ID" value="NM_024422.6"/>
</dbReference>
<dbReference type="PDB" id="5ERP">
    <property type="method" value="X-ray"/>
    <property type="resolution" value="2.70 A"/>
    <property type="chains" value="A/B=236-680"/>
</dbReference>
<dbReference type="PDB" id="5J5J">
    <property type="method" value="X-ray"/>
    <property type="resolution" value="3.29 A"/>
    <property type="chains" value="A=136-235"/>
</dbReference>
<dbReference type="PDB" id="7A7D">
    <property type="method" value="EM"/>
    <property type="resolution" value="26.00 A"/>
    <property type="chains" value="a/b/c/d/e/f/g=136-679"/>
</dbReference>
<dbReference type="PDBsum" id="5ERP"/>
<dbReference type="PDBsum" id="5J5J"/>
<dbReference type="PDBsum" id="7A7D"/>
<dbReference type="EMDB" id="EMD-11678"/>
<dbReference type="SMR" id="Q02487"/>
<dbReference type="BioGRID" id="108158">
    <property type="interactions" value="214"/>
</dbReference>
<dbReference type="FunCoup" id="Q02487">
    <property type="interactions" value="705"/>
</dbReference>
<dbReference type="IntAct" id="Q02487">
    <property type="interactions" value="81"/>
</dbReference>
<dbReference type="MINT" id="Q02487"/>
<dbReference type="STRING" id="9606.ENSP00000280904"/>
<dbReference type="TCDB" id="8.A.204.1.5">
    <property type="family name" value="the cadhesin (cdh) family"/>
</dbReference>
<dbReference type="CarbonylDB" id="Q02487"/>
<dbReference type="GlyConnect" id="1171">
    <property type="glycosylation" value="41 N-Linked glycans (5 sites)"/>
</dbReference>
<dbReference type="GlyCosmos" id="Q02487">
    <property type="glycosylation" value="6 sites, 43 glycans"/>
</dbReference>
<dbReference type="GlyGen" id="Q02487">
    <property type="glycosylation" value="6 sites, 64 N-linked glycans (5 sites)"/>
</dbReference>
<dbReference type="iPTMnet" id="Q02487"/>
<dbReference type="PhosphoSitePlus" id="Q02487"/>
<dbReference type="SwissPalm" id="Q02487"/>
<dbReference type="BioMuta" id="DSC2"/>
<dbReference type="DMDM" id="461968"/>
<dbReference type="jPOST" id="Q02487"/>
<dbReference type="MassIVE" id="Q02487"/>
<dbReference type="PaxDb" id="9606-ENSP00000280904"/>
<dbReference type="PeptideAtlas" id="Q02487"/>
<dbReference type="PRIDE" id="Q02487"/>
<dbReference type="ProteomicsDB" id="58097">
    <molecule id="Q02487-1"/>
</dbReference>
<dbReference type="ProteomicsDB" id="58098">
    <molecule id="Q02487-2"/>
</dbReference>
<dbReference type="ABCD" id="Q02487">
    <property type="antibodies" value="4 sequenced antibodies"/>
</dbReference>
<dbReference type="Antibodypedia" id="2782">
    <property type="antibodies" value="356 antibodies from 32 providers"/>
</dbReference>
<dbReference type="DNASU" id="1824"/>
<dbReference type="Ensembl" id="ENST00000251081.8">
    <molecule id="Q02487-2"/>
    <property type="protein sequence ID" value="ENSP00000251081.6"/>
    <property type="gene ID" value="ENSG00000134755.19"/>
</dbReference>
<dbReference type="Ensembl" id="ENST00000280904.11">
    <molecule id="Q02487-1"/>
    <property type="protein sequence ID" value="ENSP00000280904.6"/>
    <property type="gene ID" value="ENSG00000134755.19"/>
</dbReference>
<dbReference type="GeneID" id="1824"/>
<dbReference type="KEGG" id="hsa:1824"/>
<dbReference type="MANE-Select" id="ENST00000280904.11">
    <property type="protein sequence ID" value="ENSP00000280904.6"/>
    <property type="RefSeq nucleotide sequence ID" value="NM_024422.6"/>
    <property type="RefSeq protein sequence ID" value="NP_077740.1"/>
</dbReference>
<dbReference type="UCSC" id="uc002kwk.5">
    <molecule id="Q02487-1"/>
    <property type="organism name" value="human"/>
</dbReference>
<dbReference type="AGR" id="HGNC:3036"/>
<dbReference type="CTD" id="1824"/>
<dbReference type="DisGeNET" id="1824"/>
<dbReference type="GeneCards" id="DSC2"/>
<dbReference type="GeneReviews" id="DSC2"/>
<dbReference type="HGNC" id="HGNC:3036">
    <property type="gene designation" value="DSC2"/>
</dbReference>
<dbReference type="HPA" id="ENSG00000134755">
    <property type="expression patterns" value="Tissue enhanced (esophagus, vagina)"/>
</dbReference>
<dbReference type="MalaCards" id="DSC2"/>
<dbReference type="MIM" id="125645">
    <property type="type" value="gene"/>
</dbReference>
<dbReference type="MIM" id="610476">
    <property type="type" value="phenotype"/>
</dbReference>
<dbReference type="neXtProt" id="NX_Q02487"/>
<dbReference type="OpenTargets" id="ENSG00000134755"/>
<dbReference type="Orphanet" id="293888">
    <property type="disease" value="Inherited isolated arrhythmogenic cardiomyopathy, dominant-left variant"/>
</dbReference>
<dbReference type="Orphanet" id="293910">
    <property type="disease" value="Inherited isolated arrhythmogenic cardiomyopathy, dominant-right variant"/>
</dbReference>
<dbReference type="Orphanet" id="293899">
    <property type="disease" value="Inherited isolated arrhythmogenic ventricular dysplasia, biventricular variant"/>
</dbReference>
<dbReference type="PharmGKB" id="PA27489"/>
<dbReference type="VEuPathDB" id="HostDB:ENSG00000134755"/>
<dbReference type="eggNOG" id="KOG3594">
    <property type="taxonomic scope" value="Eukaryota"/>
</dbReference>
<dbReference type="GeneTree" id="ENSGT01030000234624"/>
<dbReference type="HOGENOM" id="CLU_005284_0_2_1"/>
<dbReference type="InParanoid" id="Q02487"/>
<dbReference type="OMA" id="CIPVEDK"/>
<dbReference type="OrthoDB" id="6079678at2759"/>
<dbReference type="PAN-GO" id="Q02487">
    <property type="GO annotations" value="3 GO annotations based on evolutionary models"/>
</dbReference>
<dbReference type="PhylomeDB" id="Q02487"/>
<dbReference type="TreeFam" id="TF316817"/>
<dbReference type="PathwayCommons" id="Q02487"/>
<dbReference type="Reactome" id="R-HSA-6805567">
    <property type="pathway name" value="Keratinization"/>
</dbReference>
<dbReference type="Reactome" id="R-HSA-6809371">
    <property type="pathway name" value="Formation of the cornified envelope"/>
</dbReference>
<dbReference type="SignaLink" id="Q02487"/>
<dbReference type="BioGRID-ORCS" id="1824">
    <property type="hits" value="13 hits in 1164 CRISPR screens"/>
</dbReference>
<dbReference type="ChiTaRS" id="DSC2">
    <property type="organism name" value="human"/>
</dbReference>
<dbReference type="GeneWiki" id="DSC2"/>
<dbReference type="GenomeRNAi" id="1824"/>
<dbReference type="Pharos" id="Q02487">
    <property type="development level" value="Tbio"/>
</dbReference>
<dbReference type="PRO" id="PR:Q02487"/>
<dbReference type="Proteomes" id="UP000005640">
    <property type="component" value="Chromosome 18"/>
</dbReference>
<dbReference type="RNAct" id="Q02487">
    <property type="molecule type" value="protein"/>
</dbReference>
<dbReference type="Bgee" id="ENSG00000134755">
    <property type="expression patterns" value="Expressed in gingival epithelium and 175 other cell types or tissues"/>
</dbReference>
<dbReference type="ExpressionAtlas" id="Q02487">
    <property type="expression patterns" value="baseline and differential"/>
</dbReference>
<dbReference type="GO" id="GO:0005912">
    <property type="term" value="C:adherens junction"/>
    <property type="evidence" value="ECO:0007669"/>
    <property type="project" value="Ensembl"/>
</dbReference>
<dbReference type="GO" id="GO:0001533">
    <property type="term" value="C:cornified envelope"/>
    <property type="evidence" value="ECO:0000304"/>
    <property type="project" value="Reactome"/>
</dbReference>
<dbReference type="GO" id="GO:0031410">
    <property type="term" value="C:cytoplasmic vesicle"/>
    <property type="evidence" value="ECO:0000314"/>
    <property type="project" value="UniProtKB"/>
</dbReference>
<dbReference type="GO" id="GO:0030057">
    <property type="term" value="C:desmosome"/>
    <property type="evidence" value="ECO:0000314"/>
    <property type="project" value="UniProtKB"/>
</dbReference>
<dbReference type="GO" id="GO:0005783">
    <property type="term" value="C:endoplasmic reticulum"/>
    <property type="evidence" value="ECO:0000314"/>
    <property type="project" value="HPA"/>
</dbReference>
<dbReference type="GO" id="GO:0070062">
    <property type="term" value="C:extracellular exosome"/>
    <property type="evidence" value="ECO:0007005"/>
    <property type="project" value="UniProtKB"/>
</dbReference>
<dbReference type="GO" id="GO:0014704">
    <property type="term" value="C:intercalated disc"/>
    <property type="evidence" value="ECO:0000314"/>
    <property type="project" value="UniProtKB"/>
</dbReference>
<dbReference type="GO" id="GO:0005886">
    <property type="term" value="C:plasma membrane"/>
    <property type="evidence" value="ECO:0000314"/>
    <property type="project" value="HPA"/>
</dbReference>
<dbReference type="GO" id="GO:0005509">
    <property type="term" value="F:calcium ion binding"/>
    <property type="evidence" value="ECO:0000318"/>
    <property type="project" value="GO_Central"/>
</dbReference>
<dbReference type="GO" id="GO:0086083">
    <property type="term" value="F:cell adhesive protein binding involved in bundle of His cell-Purkinje myocyte communication"/>
    <property type="evidence" value="ECO:0000305"/>
    <property type="project" value="BHF-UCL"/>
</dbReference>
<dbReference type="GO" id="GO:0086073">
    <property type="term" value="P:bundle of His cell-Purkinje myocyte adhesion involved in cell communication"/>
    <property type="evidence" value="ECO:0000315"/>
    <property type="project" value="BHF-UCL"/>
</dbReference>
<dbReference type="GO" id="GO:0086042">
    <property type="term" value="P:cardiac muscle cell-cardiac muscle cell adhesion"/>
    <property type="evidence" value="ECO:0000315"/>
    <property type="project" value="UniProtKB"/>
</dbReference>
<dbReference type="GO" id="GO:0007155">
    <property type="term" value="P:cell adhesion"/>
    <property type="evidence" value="ECO:0000304"/>
    <property type="project" value="ProtInc"/>
</dbReference>
<dbReference type="GO" id="GO:0098609">
    <property type="term" value="P:cell-cell adhesion"/>
    <property type="evidence" value="ECO:0000318"/>
    <property type="project" value="GO_Central"/>
</dbReference>
<dbReference type="GO" id="GO:0009267">
    <property type="term" value="P:cellular response to starvation"/>
    <property type="evidence" value="ECO:0007669"/>
    <property type="project" value="Ensembl"/>
</dbReference>
<dbReference type="GO" id="GO:0007156">
    <property type="term" value="P:homophilic cell adhesion via plasma membrane adhesion molecules"/>
    <property type="evidence" value="ECO:0007669"/>
    <property type="project" value="InterPro"/>
</dbReference>
<dbReference type="GO" id="GO:1900745">
    <property type="term" value="P:positive regulation of p38MAPK cascade"/>
    <property type="evidence" value="ECO:0000315"/>
    <property type="project" value="UniProtKB"/>
</dbReference>
<dbReference type="GO" id="GO:0086091">
    <property type="term" value="P:regulation of heart rate by cardiac conduction"/>
    <property type="evidence" value="ECO:0000315"/>
    <property type="project" value="BHF-UCL"/>
</dbReference>
<dbReference type="GO" id="GO:0098911">
    <property type="term" value="P:regulation of ventricular cardiac muscle cell action potential"/>
    <property type="evidence" value="ECO:0000315"/>
    <property type="project" value="BHF-UCL"/>
</dbReference>
<dbReference type="CDD" id="cd11304">
    <property type="entry name" value="Cadherin_repeat"/>
    <property type="match status" value="4"/>
</dbReference>
<dbReference type="FunFam" id="2.60.40.60:FF:000011">
    <property type="entry name" value="Cadherin 1"/>
    <property type="match status" value="1"/>
</dbReference>
<dbReference type="FunFam" id="2.60.40.60:FF:000019">
    <property type="entry name" value="Cadherin 2"/>
    <property type="match status" value="1"/>
</dbReference>
<dbReference type="FunFam" id="2.60.40.60:FF:000027">
    <property type="entry name" value="Cadherin 2"/>
    <property type="match status" value="1"/>
</dbReference>
<dbReference type="FunFam" id="2.60.40.60:FF:000031">
    <property type="entry name" value="Cadherin 3"/>
    <property type="match status" value="1"/>
</dbReference>
<dbReference type="FunFam" id="2.60.40.60:FF:000091">
    <property type="entry name" value="Desmocollin 1"/>
    <property type="match status" value="1"/>
</dbReference>
<dbReference type="FunFam" id="2.60.40.60:FF:000096">
    <property type="entry name" value="Desmocollin 2"/>
    <property type="match status" value="1"/>
</dbReference>
<dbReference type="FunFam" id="4.10.900.10:FF:000005">
    <property type="entry name" value="Desmocollin 2"/>
    <property type="match status" value="1"/>
</dbReference>
<dbReference type="Gene3D" id="2.60.40.60">
    <property type="entry name" value="Cadherins"/>
    <property type="match status" value="6"/>
</dbReference>
<dbReference type="Gene3D" id="4.10.900.10">
    <property type="entry name" value="TCF3-CBD (Catenin binding domain)"/>
    <property type="match status" value="1"/>
</dbReference>
<dbReference type="InterPro" id="IPR050971">
    <property type="entry name" value="Cadherin-domain_protein"/>
</dbReference>
<dbReference type="InterPro" id="IPR002126">
    <property type="entry name" value="Cadherin-like_dom"/>
</dbReference>
<dbReference type="InterPro" id="IPR015919">
    <property type="entry name" value="Cadherin-like_sf"/>
</dbReference>
<dbReference type="InterPro" id="IPR020894">
    <property type="entry name" value="Cadherin_CS"/>
</dbReference>
<dbReference type="InterPro" id="IPR014868">
    <property type="entry name" value="Cadherin_pro_dom"/>
</dbReference>
<dbReference type="InterPro" id="IPR000233">
    <property type="entry name" value="Cadherin_Y-type_LIR"/>
</dbReference>
<dbReference type="InterPro" id="IPR027397">
    <property type="entry name" value="Catenin-bd_sf"/>
</dbReference>
<dbReference type="InterPro" id="IPR009122">
    <property type="entry name" value="Desmosomal_cadherin"/>
</dbReference>
<dbReference type="PANTHER" id="PTHR24025:SF0">
    <property type="entry name" value="DESMOCOLLIN-2"/>
    <property type="match status" value="1"/>
</dbReference>
<dbReference type="PANTHER" id="PTHR24025">
    <property type="entry name" value="DESMOGLEIN FAMILY MEMBER"/>
    <property type="match status" value="1"/>
</dbReference>
<dbReference type="Pfam" id="PF01049">
    <property type="entry name" value="CADH_Y-type_LIR"/>
    <property type="match status" value="1"/>
</dbReference>
<dbReference type="Pfam" id="PF00028">
    <property type="entry name" value="Cadherin"/>
    <property type="match status" value="4"/>
</dbReference>
<dbReference type="Pfam" id="PF08758">
    <property type="entry name" value="Cadherin_pro"/>
    <property type="match status" value="1"/>
</dbReference>
<dbReference type="PRINTS" id="PR00205">
    <property type="entry name" value="CADHERIN"/>
</dbReference>
<dbReference type="PRINTS" id="PR01818">
    <property type="entry name" value="DESMOCADHERN"/>
</dbReference>
<dbReference type="PRINTS" id="PR01820">
    <property type="entry name" value="DESMOCOLLIN"/>
</dbReference>
<dbReference type="SMART" id="SM00112">
    <property type="entry name" value="CA"/>
    <property type="match status" value="5"/>
</dbReference>
<dbReference type="SMART" id="SM01055">
    <property type="entry name" value="Cadherin_pro"/>
    <property type="match status" value="1"/>
</dbReference>
<dbReference type="SUPFAM" id="SSF49313">
    <property type="entry name" value="Cadherin-like"/>
    <property type="match status" value="6"/>
</dbReference>
<dbReference type="PROSITE" id="PS00232">
    <property type="entry name" value="CADHERIN_1"/>
    <property type="match status" value="3"/>
</dbReference>
<dbReference type="PROSITE" id="PS50268">
    <property type="entry name" value="CADHERIN_2"/>
    <property type="match status" value="5"/>
</dbReference>
<feature type="signal peptide" evidence="2">
    <location>
        <begin position="1"/>
        <end position="27"/>
    </location>
</feature>
<feature type="propeptide" id="PRO_0000003869" evidence="2">
    <location>
        <begin position="28"/>
        <end position="135"/>
    </location>
</feature>
<feature type="chain" id="PRO_0000003870" description="Desmocollin-2">
    <location>
        <begin position="136"/>
        <end position="901"/>
    </location>
</feature>
<feature type="topological domain" description="Extracellular" evidence="2">
    <location>
        <begin position="136"/>
        <end position="694"/>
    </location>
</feature>
<feature type="transmembrane region" description="Helical" evidence="2">
    <location>
        <begin position="695"/>
        <end position="715"/>
    </location>
</feature>
<feature type="topological domain" description="Cytoplasmic" evidence="2">
    <location>
        <begin position="716"/>
        <end position="901"/>
    </location>
</feature>
<feature type="domain" description="Cadherin 1" evidence="3">
    <location>
        <begin position="136"/>
        <end position="243"/>
    </location>
</feature>
<feature type="domain" description="Cadherin 2" evidence="3">
    <location>
        <begin position="244"/>
        <end position="355"/>
    </location>
</feature>
<feature type="domain" description="Cadherin 3" evidence="3">
    <location>
        <begin position="356"/>
        <end position="471"/>
    </location>
</feature>
<feature type="domain" description="Cadherin 4" evidence="3">
    <location>
        <begin position="472"/>
        <end position="579"/>
    </location>
</feature>
<feature type="domain" description="Cadherin 5" evidence="3">
    <location>
        <begin position="580"/>
        <end position="694"/>
    </location>
</feature>
<feature type="modified residue" description="Phosphoserine" evidence="26">
    <location>
        <position position="864"/>
    </location>
</feature>
<feature type="modified residue" description="Phosphoserine" evidence="26">
    <location>
        <position position="868"/>
    </location>
</feature>
<feature type="modified residue" description="Phosphoserine" evidence="26">
    <location>
        <position position="873"/>
    </location>
</feature>
<feature type="glycosylation site" description="N-linked (GlcNAc...) asparagine" evidence="2">
    <location>
        <position position="34"/>
    </location>
</feature>
<feature type="glycosylation site" description="N-linked (GlcNAc...) asparagine" evidence="2">
    <location>
        <position position="166"/>
    </location>
</feature>
<feature type="glycosylation site" description="N-linked (GlcNAc...) (complex) asparagine" evidence="5 9">
    <location>
        <position position="392"/>
    </location>
</feature>
<feature type="glycosylation site" description="N-linked (GlcNAc...) asparagine" evidence="4">
    <location>
        <position position="546"/>
    </location>
</feature>
<feature type="glycosylation site" description="N-linked (GlcNAc...) asparagine" evidence="5">
    <location>
        <position position="629"/>
    </location>
</feature>
<feature type="splice variant" id="VSP_000657" description="In isoform 2B." evidence="22">
    <original>KVYLCNQDENH</original>
    <variation>ESIRGHTLIKN</variation>
    <location>
        <begin position="837"/>
        <end position="847"/>
    </location>
</feature>
<feature type="splice variant" id="VSP_000658" description="In isoform 2B." evidence="22">
    <location>
        <begin position="848"/>
        <end position="901"/>
    </location>
</feature>
<feature type="sequence variant" id="VAR_029480" description="In dbSNP:rs868333." evidence="11">
    <original>N</original>
    <variation>S</variation>
    <location>
        <position position="11"/>
    </location>
</feature>
<feature type="sequence variant" id="VAR_089961" description="In ARVD11; uncertain significance; abolishes localization at desmosomes and partially mis-localizes to the cytoplasm; dbSNP:rs144799937." evidence="7">
    <original>E</original>
    <variation>K</variation>
    <location>
        <position position="102"/>
    </location>
</feature>
<feature type="sequence variant" id="VAR_087290" description="In ARVD11; uncertain significance; dbSNP:rs727504578." evidence="21">
    <original>R</original>
    <variation>C</variation>
    <location>
        <position position="132"/>
    </location>
</feature>
<feature type="sequence variant" id="VAR_089962" description="In ARVD11; uncertain significance; dbSNP:rs760185784." evidence="16">
    <original>D</original>
    <variation>G</variation>
    <location>
        <position position="179"/>
    </location>
</feature>
<feature type="sequence variant" id="VAR_065687" description="In ARVD11; fails to undergo complete processing into a mature form; fails to localize at the desmosomes; dbSNP:rs142331975." evidence="12">
    <original>R</original>
    <variation>C</variation>
    <location>
        <position position="203"/>
    </location>
</feature>
<feature type="sequence variant" id="VAR_065688" description="In ARVD11; dbSNP:rs1390387214." evidence="10">
    <original>I</original>
    <variation>T</variation>
    <location>
        <position position="231"/>
    </location>
</feature>
<feature type="sequence variant" id="VAR_089963" description="In ARVD11; uncertain significance; dbSNP:rs765560490." evidence="14">
    <location>
        <position position="238"/>
    </location>
</feature>
<feature type="sequence variant" id="VAR_065689" description="In ARVD11; can be processed into a mature form but shows a higher pro-protein to mature protein ratio; only a proportion of the partly functional mutant is incorporated into the desmosomes; dbSNP:rs397517404." evidence="12">
    <original>T</original>
    <variation>M</variation>
    <location>
        <position position="275"/>
    </location>
</feature>
<feature type="sequence variant" id="VAR_065690" description="In ARVD11; dbSNP:rs368299411." evidence="10">
    <original>T</original>
    <variation>A</variation>
    <location>
        <position position="340"/>
    </location>
</feature>
<feature type="sequence variant" id="VAR_089964" description="In ARVD11; uncertain significance; abolishes localization at desmosomes and mis-localizes to the cytoplasm; dbSNP:rs777688726." evidence="7">
    <original>I</original>
    <variation>T</variation>
    <location>
        <position position="345"/>
    </location>
</feature>
<feature type="sequence variant" id="VAR_062391" description="In dbSNP:rs139399951." evidence="8">
    <original>T</original>
    <variation>I</variation>
    <location>
        <position position="358"/>
    </location>
</feature>
<feature type="sequence variant" id="VAR_078340" description="In ARVD11." evidence="17">
    <original>V</original>
    <variation>M</variation>
    <location>
        <position position="364"/>
    </location>
</feature>
<feature type="sequence variant" id="VAR_089965" description="In ARVD11; likely pathogenic; mislocalization of DSC2 to the cytoplasm within intercalated disks of the heart; dbSNP:rs878853170." evidence="13">
    <location>
        <begin position="554"/>
        <end position="901"/>
    </location>
</feature>
<feature type="sequence variant" id="VAR_065691" description="In dbSNP:rs148185335." evidence="11">
    <original>A</original>
    <variation>V</variation>
    <location>
        <position position="596"/>
    </location>
</feature>
<feature type="sequence variant" id="VAR_065692" description="In dbSNP:rs147742157." evidence="11">
    <original>Q</original>
    <variation>H</variation>
    <location>
        <position position="638"/>
    </location>
</feature>
<feature type="sequence variant" id="VAR_024388" description="In dbSNP:rs1893963." evidence="8 11">
    <original>I</original>
    <variation>V</variation>
    <location>
        <position position="776"/>
    </location>
</feature>
<feature type="sequence variant" id="VAR_062392" description="In dbSNP:rs61731921." evidence="8 10 11">
    <original>R</original>
    <variation>Q</variation>
    <location>
        <position position="798"/>
    </location>
</feature>
<feature type="strand" evidence="28">
    <location>
        <begin position="142"/>
        <end position="147"/>
    </location>
</feature>
<feature type="strand" evidence="28">
    <location>
        <begin position="152"/>
        <end position="158"/>
    </location>
</feature>
<feature type="turn" evidence="28">
    <location>
        <begin position="163"/>
        <end position="166"/>
    </location>
</feature>
<feature type="strand" evidence="28">
    <location>
        <begin position="172"/>
        <end position="175"/>
    </location>
</feature>
<feature type="turn" evidence="28">
    <location>
        <begin position="176"/>
        <end position="178"/>
    </location>
</feature>
<feature type="strand" evidence="28">
    <location>
        <begin position="179"/>
        <end position="182"/>
    </location>
</feature>
<feature type="strand" evidence="28">
    <location>
        <begin position="184"/>
        <end position="188"/>
    </location>
</feature>
<feature type="turn" evidence="28">
    <location>
        <begin position="190"/>
        <end position="192"/>
    </location>
</feature>
<feature type="strand" evidence="28">
    <location>
        <begin position="194"/>
        <end position="197"/>
    </location>
</feature>
<feature type="turn" evidence="28">
    <location>
        <begin position="203"/>
        <end position="205"/>
    </location>
</feature>
<feature type="strand" evidence="28">
    <location>
        <begin position="212"/>
        <end position="214"/>
    </location>
</feature>
<feature type="strand" evidence="28">
    <location>
        <begin position="230"/>
        <end position="234"/>
    </location>
</feature>
<feature type="strand" evidence="27">
    <location>
        <begin position="241"/>
        <end position="244"/>
    </location>
</feature>
<feature type="strand" evidence="27">
    <location>
        <begin position="246"/>
        <end position="253"/>
    </location>
</feature>
<feature type="strand" evidence="27">
    <location>
        <begin position="261"/>
        <end position="264"/>
    </location>
</feature>
<feature type="strand" evidence="27">
    <location>
        <begin position="267"/>
        <end position="269"/>
    </location>
</feature>
<feature type="helix" evidence="27">
    <location>
        <begin position="276"/>
        <end position="278"/>
    </location>
</feature>
<feature type="strand" evidence="27">
    <location>
        <begin position="281"/>
        <end position="289"/>
    </location>
</feature>
<feature type="strand" evidence="27">
    <location>
        <begin position="295"/>
        <end position="297"/>
    </location>
</feature>
<feature type="turn" evidence="27">
    <location>
        <begin position="299"/>
        <end position="301"/>
    </location>
</feature>
<feature type="strand" evidence="27">
    <location>
        <begin position="303"/>
        <end position="307"/>
    </location>
</feature>
<feature type="turn" evidence="27">
    <location>
        <begin position="313"/>
        <end position="315"/>
    </location>
</feature>
<feature type="strand" evidence="27">
    <location>
        <begin position="318"/>
        <end position="327"/>
    </location>
</feature>
<feature type="helix" evidence="27">
    <location>
        <begin position="328"/>
        <end position="330"/>
    </location>
</feature>
<feature type="strand" evidence="27">
    <location>
        <begin position="336"/>
        <end position="346"/>
    </location>
</feature>
<feature type="strand" evidence="27">
    <location>
        <begin position="354"/>
        <end position="365"/>
    </location>
</feature>
<feature type="strand" evidence="27">
    <location>
        <begin position="370"/>
        <end position="376"/>
    </location>
</feature>
<feature type="turn" evidence="27">
    <location>
        <begin position="387"/>
        <end position="389"/>
    </location>
</feature>
<feature type="strand" evidence="27">
    <location>
        <begin position="390"/>
        <end position="398"/>
    </location>
</feature>
<feature type="strand" evidence="27">
    <location>
        <begin position="404"/>
        <end position="408"/>
    </location>
</feature>
<feature type="turn" evidence="27">
    <location>
        <begin position="410"/>
        <end position="412"/>
    </location>
</feature>
<feature type="strand" evidence="27">
    <location>
        <begin position="415"/>
        <end position="419"/>
    </location>
</feature>
<feature type="turn" evidence="27">
    <location>
        <begin position="425"/>
        <end position="427"/>
    </location>
</feature>
<feature type="strand" evidence="27">
    <location>
        <begin position="429"/>
        <end position="441"/>
    </location>
</feature>
<feature type="strand" evidence="27">
    <location>
        <begin position="454"/>
        <end position="463"/>
    </location>
</feature>
<feature type="strand" evidence="27">
    <location>
        <begin position="472"/>
        <end position="481"/>
    </location>
</feature>
<feature type="turn" evidence="27">
    <location>
        <begin position="498"/>
        <end position="500"/>
    </location>
</feature>
<feature type="strand" evidence="27">
    <location>
        <begin position="518"/>
        <end position="520"/>
    </location>
</feature>
<feature type="turn" evidence="27">
    <location>
        <begin position="522"/>
        <end position="524"/>
    </location>
</feature>
<feature type="strand" evidence="27">
    <location>
        <begin position="527"/>
        <end position="529"/>
    </location>
</feature>
<feature type="strand" evidence="27">
    <location>
        <begin position="544"/>
        <end position="552"/>
    </location>
</feature>
<feature type="strand" evidence="27">
    <location>
        <begin position="558"/>
        <end position="568"/>
    </location>
</feature>
<feature type="turn" evidence="27">
    <location>
        <begin position="586"/>
        <end position="588"/>
    </location>
</feature>
<feature type="strand" evidence="27">
    <location>
        <begin position="590"/>
        <end position="595"/>
    </location>
</feature>
<feature type="helix" evidence="27">
    <location>
        <begin position="602"/>
        <end position="604"/>
    </location>
</feature>
<feature type="strand" evidence="27">
    <location>
        <begin position="609"/>
        <end position="611"/>
    </location>
</feature>
<feature type="turn" evidence="27">
    <location>
        <begin position="617"/>
        <end position="622"/>
    </location>
</feature>
<feature type="strand" evidence="27">
    <location>
        <begin position="624"/>
        <end position="636"/>
    </location>
</feature>
<feature type="strand" evidence="27">
    <location>
        <begin position="643"/>
        <end position="645"/>
    </location>
</feature>
<feature type="strand" evidence="27">
    <location>
        <begin position="648"/>
        <end position="653"/>
    </location>
</feature>
<feature type="strand" evidence="27">
    <location>
        <begin position="659"/>
        <end position="664"/>
    </location>
</feature>
<feature type="strand" evidence="27">
    <location>
        <begin position="672"/>
        <end position="675"/>
    </location>
</feature>
<sequence>MEAARPSGSWNGALCRLLLLTLAILIFASDACKNVTLHVPSKLDAEKLVGRVNLKECFTAANLIHSSDPDFQILEDGSVYTTNTILLSSEKRSFTILLSNTENQEKKKIFVFLEHQTKVLKKRHTKEKVLRRAKRRWAPIPCSMLENSLGPFPLFLQQVQSDTAQNYTIYYSIRGPGVDQEPRNLFYVERDTGNLYCTRPVDREQYESFEIIAFATTPDGYTPELPLPLIIKIEDENDNYPIFTEETYTFTIFENCRVGTTVGQVCATDKDEPDTMHTRLKYSIIGQVPPSPTLFSMHPTTGVITTTSSQLDRELIDKYQLKIKVQDMDGQYFGLQTTSTCIINIDDVNDHLPTFTRTSYVTSVEENTVDVEILRVTVEDKDLVNTANWRANYTILKGNENGNFKIVTDAKTNEGVLCVVKPLNYEEKQQMILQIGVVNEAPFSREASPRSAMSTATVTVNVEDQDEGPECNPPIQTVRMKENAEVGTTSNGYKAYDPETRSSSGIRYKKLTDPTGWVTIDENTGSIKVFRSLDREAETIKNGIYNITVLASDQGGRTCTGTLGIILQDVNDNSPFIPKKTVIICKPTMSSAEIVAVDPDEPIHGPPFDFSLESSTSEVQRMWRLKAINDTAARLSYQNDPPFGSYVVPITVRDRLGMSSVTSLDVTLCDCITENDCTHRVDPRIGGGGVQLGKWAILAILLGIALLFCILFTLVCGASGTSKQPKVIPDDLAQQNLIVSNTEAPGDDKVYSANGFTTQTVGASAQGVCGTVGSGIKNGGQETIEMVKGGHQTSESCRGAGHHHTLDSCRGGHTEVDNCRYTYSEWHSFTQPRLGEKVYLCNQDENHKHAQDYVLTYNYEGRGSVAGSVGCCSERQEEDGLEFLDNLEPKFRTLAEACMKR</sequence>
<proteinExistence type="evidence at protein level"/>
<comment type="function">
    <text evidence="1 19 20">A component of desmosome cell-cell junctions which are required for positive regulation of cellular adhesion (PubMed:33596089). Promotes timely incorporation of DSG2 into desmosome intercellular junctions and promotes interaction of desmosome cell junctions with intermediate filament cytokeratin, via modulation of DSP phosphorylation (PubMed:33596089). Plays an important role in desmosome-mediated maintenance of intestinal epithelial cell intercellular adhesion strength and barrier function (PubMed:33596089). Positively regulates wound healing of intestinal mucosa via promotion of epithelial cell migration, and also plays a role in mechanotransduction of force between intestinal epithelial cells and extracellular matrix (PubMed:31967937). May contribute to epidermal cell positioning (stratification) by mediating differential adhesiveness between cells that express different isoforms. May promote p38MAPK signaling activation that facilitates keratinocyte migration (By similarity).</text>
</comment>
<comment type="subunit">
    <text evidence="1 12">Interacts with DSP, PKP2 and JUP (PubMed:21062920). Interacts with DSG3; the interaction may limit the interaction of DSC3 with p38MAPK family members and therefore repress p38MAPK signaling activation (By similarity).</text>
</comment>
<comment type="interaction">
    <interactant intactId="EBI-6900677">
        <id>Q02487-1</id>
    </interactant>
    <interactant intactId="EBI-1103439">
        <id>P17302</id>
        <label>GJA1</label>
    </interactant>
    <organismsDiffer>false</organismsDiffer>
    <experiments>2</experiments>
</comment>
<comment type="interaction">
    <interactant intactId="EBI-6900677">
        <id>Q02487-1</id>
    </interactant>
    <interactant intactId="EBI-6901331">
        <id>Q6TYA9</id>
        <label>GJA1</label>
    </interactant>
    <organismsDiffer>true</organismsDiffer>
    <experiments>3</experiments>
</comment>
<comment type="interaction">
    <interactant intactId="EBI-6900677">
        <id>Q02487-1</id>
    </interactant>
    <interactant intactId="EBI-6900770">
        <id>F1M7L9</id>
        <label>Pkp2</label>
    </interactant>
    <organismsDiffer>true</organismsDiffer>
    <experiments>2</experiments>
</comment>
<comment type="subcellular location">
    <subcellularLocation>
        <location evidence="7 12 13">Cell membrane</location>
        <topology evidence="12">Single-pass type I membrane protein</topology>
    </subcellularLocation>
    <subcellularLocation>
        <location evidence="7 12 15">Cell junction</location>
        <location evidence="7 12 15">Desmosome</location>
    </subcellularLocation>
</comment>
<comment type="alternative products">
    <event type="alternative splicing"/>
    <isoform>
        <id>Q02487-1</id>
        <name>2A</name>
        <name>DGII</name>
        <sequence type="displayed"/>
    </isoform>
    <isoform>
        <id>Q02487-2</id>
        <name>2B</name>
        <name>DGIII</name>
        <sequence type="described" ref="VSP_000657 VSP_000658"/>
    </isoform>
</comment>
<comment type="tissue specificity">
    <text evidence="13 19 21">Expressed at intercalated disks in the heart, where it is colocalized with CDH2 (at protein level) (PubMed:23863954, PubMed:33784018). Expressed in intestinal mucosal cells (at protein level) (PubMed:31967937).</text>
</comment>
<comment type="induction">
    <text evidence="18">Induced in the hours following cyclic mechanical strain in keratinocytes.</text>
</comment>
<comment type="domain">
    <text evidence="24">Calcium may be bound by the cadherin-like repeats.</text>
</comment>
<comment type="domain">
    <text evidence="24">Three calcium ions are usually bound at the interface of each cadherin domain and rigidify the connections, imparting a strong curvature to the full-length ectodomain.</text>
</comment>
<comment type="disease" evidence="6 7 10 12 13 14 16 17 21">
    <disease id="DI-01555">
        <name>Arrhythmogenic right ventricular dysplasia, familial, 11</name>
        <acronym>ARVD11</acronym>
        <description>A congenital heart disease characterized by infiltration of adipose and fibrous tissue into the right ventricle and loss of myocardial cells, resulting in ventricular and supraventricular arrhythmias.</description>
        <dbReference type="MIM" id="610476"/>
    </disease>
    <text>The disease is caused by variants affecting the gene represented in this entry.</text>
</comment>
<comment type="miscellaneous">
    <text evidence="19">Expression is decreased in the intestinal mucosa of ulcerative colitis patients, potential adversely effecting wound healing of the intestinal mucosa.</text>
</comment>
<comment type="sequence caution" evidence="24">
    <conflict type="erroneous initiation">
        <sequence resource="EMBL-CDS" id="CAA40141"/>
    </conflict>
    <text>Extended N-terminus.</text>
</comment>
<comment type="sequence caution" evidence="24">
    <conflict type="erroneous initiation">
        <sequence resource="EMBL-CDS" id="CAA40142"/>
    </conflict>
    <text>Extended N-terminus.</text>
</comment>
<reference key="1">
    <citation type="journal article" date="1991" name="J. Biol. Chem.">
        <title>Desmosomal glycoproteins II and III. Cadherin-like junctional molecules generated by alternative splicing.</title>
        <authorList>
            <person name="Parker A.E."/>
            <person name="Wheeler G.N."/>
            <person name="Arnemann J."/>
            <person name="Pidsley S.C."/>
            <person name="Ataliotis P."/>
            <person name="Thomas C.L."/>
            <person name="Rees D.A."/>
            <person name="Magee A.I."/>
            <person name="Buxton R.S."/>
        </authorList>
    </citation>
    <scope>NUCLEOTIDE SEQUENCE [MRNA] (ISOFORMS 2A AND 2B)</scope>
    <source>
        <tissue>Keratinocyte</tissue>
    </source>
</reference>
<reference key="2">
    <citation type="journal article" date="2004" name="Genome Res.">
        <title>The status, quality, and expansion of the NIH full-length cDNA project: the Mammalian Gene Collection (MGC).</title>
        <authorList>
            <consortium name="The MGC Project Team"/>
        </authorList>
    </citation>
    <scope>NUCLEOTIDE SEQUENCE [LARGE SCALE MRNA] (ISOFORM 2A)</scope>
    <source>
        <tissue>Placenta</tissue>
    </source>
</reference>
<reference key="3">
    <citation type="journal article" date="2005" name="J. Proteome Res.">
        <title>Human plasma N-glycoproteome analysis by immunoaffinity subtraction, hydrazide chemistry, and mass spectrometry.</title>
        <authorList>
            <person name="Liu T."/>
            <person name="Qian W.-J."/>
            <person name="Gritsenko M.A."/>
            <person name="Camp D.G. II"/>
            <person name="Monroe M.E."/>
            <person name="Moore R.J."/>
            <person name="Smith R.D."/>
        </authorList>
    </citation>
    <scope>GLYCOSYLATION [LARGE SCALE ANALYSIS] AT ASN-546</scope>
    <source>
        <tissue>Plasma</tissue>
    </source>
</reference>
<reference key="4">
    <citation type="journal article" date="2006" name="J. Proteome Res.">
        <title>Identification of N-linked glycoproteins in human saliva by glycoprotein capture and mass spectrometry.</title>
        <authorList>
            <person name="Ramachandran P."/>
            <person name="Boontheung P."/>
            <person name="Xie Y."/>
            <person name="Sondej M."/>
            <person name="Wong D.T."/>
            <person name="Loo J.A."/>
        </authorList>
    </citation>
    <scope>GLYCOSYLATION [LARGE SCALE ANALYSIS] AT ASN-392 AND ASN-629</scope>
    <source>
        <tissue>Saliva</tissue>
    </source>
</reference>
<reference key="5">
    <citation type="journal article" date="2006" name="Am. J. Hum. Genet.">
        <title>Arrhythmogenic right ventricular dysplasia/cardiomyopathy associated with mutations in the desmosomal gene desmocollin-2.</title>
        <authorList>
            <person name="Syrris P."/>
            <person name="Ward D."/>
            <person name="Evans A."/>
            <person name="Asimaki A."/>
            <person name="Gandjbakhch E."/>
            <person name="Sen-Chowdhry S."/>
            <person name="McKenna W.J."/>
        </authorList>
    </citation>
    <scope>INVOLVEMENT IN ARVD11</scope>
</reference>
<reference key="6">
    <citation type="journal article" date="2009" name="Mol. Cell. Proteomics">
        <title>A strategy for precise and large scale identification of core fucosylated glycoproteins.</title>
        <authorList>
            <person name="Jia W."/>
            <person name="Lu Z."/>
            <person name="Fu Y."/>
            <person name="Wang H.P."/>
            <person name="Wang L.H."/>
            <person name="Chi H."/>
            <person name="Yuan Z.F."/>
            <person name="Zheng Z.B."/>
            <person name="Song L.N."/>
            <person name="Han H.H."/>
            <person name="Liang Y.M."/>
            <person name="Wang J.L."/>
            <person name="Cai Y."/>
            <person name="Zhang Y.K."/>
            <person name="Deng Y.L."/>
            <person name="Ying W.T."/>
            <person name="He S.M."/>
            <person name="Qian X.H."/>
        </authorList>
    </citation>
    <scope>GLYCOSYLATION AT ASN-392</scope>
</reference>
<reference key="7">
    <citation type="journal article" date="2011" name="Cardiovasc. Res.">
        <title>Mechanistic insights into arrhythmogenic right ventricular cardiomyopathy caused by desmocollin-2 mutations.</title>
        <authorList>
            <person name="Gehmlich K."/>
            <person name="Syrris P."/>
            <person name="Peskett E."/>
            <person name="Evans A."/>
            <person name="Ehler E."/>
            <person name="Asimaki A."/>
            <person name="Anastasakis A."/>
            <person name="Tsatsopoulou A."/>
            <person name="Vouliotis A.I."/>
            <person name="Stefanadis C."/>
            <person name="Saffitz J.E."/>
            <person name="Protonotarios N."/>
            <person name="McKenna W.J."/>
        </authorList>
    </citation>
    <scope>SUBCELLULAR LOCATION</scope>
    <scope>INTERACTION WITH DSP; PKP2 AND JUP</scope>
    <scope>VARIANTS ARVD11 CYS-203 AND MET-275</scope>
    <scope>CHARACTERIZATION OF VARIANTS ARVD11 CYS-203 AND MET-275</scope>
</reference>
<reference key="8">
    <citation type="journal article" date="2014" name="J. Proteomics">
        <title>An enzyme assisted RP-RPLC approach for in-depth analysis of human liver phosphoproteome.</title>
        <authorList>
            <person name="Bian Y."/>
            <person name="Song C."/>
            <person name="Cheng K."/>
            <person name="Dong M."/>
            <person name="Wang F."/>
            <person name="Huang J."/>
            <person name="Sun D."/>
            <person name="Wang L."/>
            <person name="Ye M."/>
            <person name="Zou H."/>
        </authorList>
    </citation>
    <scope>PHOSPHORYLATION [LARGE SCALE ANALYSIS] AT SER-864; SER-868 AND SER-873</scope>
    <scope>IDENTIFICATION BY MASS SPECTROMETRY [LARGE SCALE ANALYSIS]</scope>
    <source>
        <tissue>Liver</tissue>
    </source>
</reference>
<reference key="9">
    <citation type="journal article" date="2014" name="Mol. Biol. Cell">
        <title>Plakophilin 3 mediates Rap1-dependent desmosome assembly and adherens junction maturation.</title>
        <authorList>
            <person name="Todorovic V."/>
            <person name="Koetsier J.L."/>
            <person name="Godsel L.M."/>
            <person name="Green K.J."/>
        </authorList>
    </citation>
    <scope>SUBCELLULAR LOCATION</scope>
</reference>
<reference key="10">
    <citation type="journal article" date="2019" name="Int. J. Mol. Sci.">
        <title>Evidence for the Desmosomal Cadherin Desmoglein-3 in Regulating YAP and Phospho-YAP in Keratinocyte Responses to Mechanical Forces.</title>
        <authorList>
            <person name="Uttagomol J."/>
            <person name="Ahmad U.S."/>
            <person name="Rehman A."/>
            <person name="Huang Y."/>
            <person name="Laly A.C."/>
            <person name="Kang A."/>
            <person name="Soetaert J."/>
            <person name="Chance R."/>
            <person name="Teh M.T."/>
            <person name="Connelly J.T."/>
            <person name="Wan H."/>
        </authorList>
    </citation>
    <scope>INDUCTION</scope>
</reference>
<reference key="11">
    <citation type="journal article" date="2020" name="Mol. Biol. Cell">
        <title>Desmocollin-2 promotes intestinal mucosal repair by controlling integrin-dependent cell adhesion and migration.</title>
        <authorList>
            <person name="Flemming S."/>
            <person name="Luissint A.C."/>
            <person name="Kusters D.H.M."/>
            <person name="Raya-Sandino A."/>
            <person name="Fan S."/>
            <person name="Zhou D.W."/>
            <person name="Hasegawa M."/>
            <person name="Garcia-Hernandez V."/>
            <person name="Garcia A.J."/>
            <person name="Parkos C.A."/>
            <person name="Nusrat A."/>
        </authorList>
    </citation>
    <scope>FUNCTION</scope>
    <scope>TISSUE SPECIFICITY</scope>
</reference>
<reference key="12">
    <citation type="journal article" date="2021" name="Mol. Biol. Cell">
        <title>Regulation of intestinal epithelial intercellular adhesion and barrier function by desmosomal cadherin desmocollin-2.</title>
        <authorList>
            <person name="Raya-Sandino A."/>
            <person name="Luissint A.C."/>
            <person name="Kusters D.H.M."/>
            <person name="Narayanan V."/>
            <person name="Flemming S."/>
            <person name="Garcia-Hernandez V."/>
            <person name="Godsel L.M."/>
            <person name="Green K.J."/>
            <person name="Hagen S.J."/>
            <person name="Conway D.E."/>
            <person name="Parkos C.A."/>
            <person name="Nusrat A."/>
        </authorList>
    </citation>
    <scope>FUNCTION</scope>
</reference>
<reference key="13">
    <citation type="journal article" date="2007" name="BMC Med. Genet.">
        <title>Missense mutations in desmocollin-2 N-terminus, associated with arrhythmogenic right ventricular cardiomyopathy, affect intracellular localization of desmocollin-2 in vitro.</title>
        <authorList>
            <person name="Beffagna G."/>
            <person name="De Bortoli M."/>
            <person name="Nava A."/>
            <person name="Salamon M."/>
            <person name="Lorenzon A."/>
            <person name="Zaccolo M."/>
            <person name="Mancuso L."/>
            <person name="Sigalotti L."/>
            <person name="Bauce B."/>
            <person name="Occhi G."/>
            <person name="Basso C."/>
            <person name="Lanfranchi G."/>
            <person name="Towbin J.A."/>
            <person name="Thiene G."/>
            <person name="Danieli G.A."/>
            <person name="Rampazzo A."/>
        </authorList>
    </citation>
    <scope>VARIANTS ARVD11 LYS-102 AND THR-345</scope>
    <scope>CHARACTERIZATION OF VARIANTS ARVD11 LYS-102 AND THR-345</scope>
    <scope>SUBCELLULAR LOCATION</scope>
</reference>
<reference key="14">
    <citation type="journal article" date="2008" name="Mol. Genet. Metab.">
        <title>A missense variant in desmoglein-2 predisposes to dilated cardiomyopathy.</title>
        <authorList>
            <person name="Posch M.G."/>
            <person name="Posch M.J."/>
            <person name="Geier C."/>
            <person name="Erdmann B."/>
            <person name="Mueller W."/>
            <person name="Richter A."/>
            <person name="Ruppert V."/>
            <person name="Pankuweit S."/>
            <person name="Maisch B."/>
            <person name="Perrot A."/>
            <person name="Buttgereit J."/>
            <person name="Dietz R."/>
            <person name="Haverkamp W."/>
            <person name="Ozcelik C."/>
        </authorList>
    </citation>
    <scope>VARIANTS ILE-358; VAL-776 AND GLN-798</scope>
</reference>
<reference key="15">
    <citation type="journal article" date="2009" name="Circ. Cardiovasc. Genet.">
        <title>Comprehensive desmosome mutation analysis in North Americans with arrhythmogenic right ventricular dysplasia/cardiomyopathy.</title>
        <authorList>
            <person name="den Haan A.D."/>
            <person name="Tan B.Y."/>
            <person name="Zikusoka M.N."/>
            <person name="Llado L.I."/>
            <person name="Jain R."/>
            <person name="Daly A."/>
            <person name="Tichnell C."/>
            <person name="James C."/>
            <person name="Amat-Alarcon N."/>
            <person name="Abraham T."/>
            <person name="Russell S.D."/>
            <person name="Bluemke D.A."/>
            <person name="Calkins H."/>
            <person name="Dalal D."/>
            <person name="Judge D.P."/>
        </authorList>
    </citation>
    <scope>VARIANTS SER-11; VAL-596; HIS-638; VAL-776 AND GLN-798</scope>
</reference>
<reference key="16">
    <citation type="journal article" date="2010" name="Clin. Genet.">
        <title>Role of genetic testing in arrhythmogenic right ventricular cardiomyopathy/dysplasia.</title>
        <authorList>
            <person name="Barahona-Dussault C."/>
            <person name="Benito B."/>
            <person name="Campuzano O."/>
            <person name="Iglesias A."/>
            <person name="Leung T.L."/>
            <person name="Robb L."/>
            <person name="Talajic M."/>
            <person name="Brugada R."/>
        </authorList>
    </citation>
    <scope>VARIANTS ARVD11 THR-231 AND ALA-340</scope>
    <scope>VARIANT GLN-798</scope>
</reference>
<reference key="17">
    <citation type="journal article" date="2013" name="Circ. Cardiovasc. Genet.">
        <title>Homozygous founder mutation in desmocollin-2 (DSC2) causes arrhythmogenic cardiomyopathy in the Hutterite population.</title>
        <authorList>
            <person name="Gerull B."/>
            <person name="Kirchner F."/>
            <person name="Chong J.X."/>
            <person name="Tagoe J."/>
            <person name="Chandrasekharan K."/>
            <person name="Strohm O."/>
            <person name="Waggoner D."/>
            <person name="Ober C."/>
            <person name="Duff H.J."/>
        </authorList>
    </citation>
    <scope>VARIANT ARVD11 554-GLN--ARG-901 DEL</scope>
    <scope>CHARACTERIZATION OF VARIANT ARVD11 554-GLN--ARG-901 DEL</scope>
    <scope>SUBCELLULAR LOCATION</scope>
    <scope>TISSUE SPECIFICITY</scope>
</reference>
<reference key="18">
    <citation type="journal article" date="2014" name="Can. J. Cardiol.">
        <title>Arrhythmogenic right ventricular cardiomyopathy with recessive inheritance related to a new homozygous desmocollin-2 mutation.</title>
        <authorList>
            <person name="Al-Sabeq B."/>
            <person name="Krahn A.D."/>
            <person name="Conacher S."/>
            <person name="Klein G.J."/>
            <person name="Laksman Z."/>
        </authorList>
    </citation>
    <scope>VARIANT ARVD11 ASP-238 DEL</scope>
</reference>
<reference key="19">
    <citation type="journal article" date="2015" name="Am. J. Cardiol.">
        <title>Homozygous Desmocollin-2 Mutations and Arrhythmogenic Cardiomyopathy.</title>
        <authorList>
            <person name="Lorenzon A."/>
            <person name="Pilichou K."/>
            <person name="Rigato I."/>
            <person name="Vazza G."/>
            <person name="De Bortoli M."/>
            <person name="Calore M."/>
            <person name="Occhi G."/>
            <person name="Carturan E."/>
            <person name="Lazzarini E."/>
            <person name="Cason M."/>
            <person name="Mazzotti E."/>
            <person name="Poloni G."/>
            <person name="Mostacciuolo M.L."/>
            <person name="Daliento L."/>
            <person name="Thiene G."/>
            <person name="Corrado D."/>
            <person name="Basso C."/>
            <person name="Bauce B."/>
            <person name="Rampazzo A."/>
        </authorList>
    </citation>
    <scope>VARIANT ARVD11 GLY-179</scope>
</reference>
<reference key="20">
    <citation type="journal article" date="2017" name="Am. J. Cardiol.">
        <title>Whole-Exome Sequencing Identifies a Novel Mutation of Desmocollin 2 in a Chinese Family With Arrhythmogenic Right Ventricular Cardiomyopathy.</title>
        <authorList>
            <person name="Liu J.S."/>
            <person name="Fan L.L."/>
            <person name="Li J.J."/>
            <person name="Xiang R."/>
        </authorList>
    </citation>
    <scope>VARIANT ARVD11 MET-364</scope>
</reference>
<reference key="21">
    <citation type="journal article" date="2021" name="Clin. Transl. Med.">
        <title>Deciphering DSC2 arrhythmogenic cardiomyopathy electrical instability: From ion channels to ECG and tailored drug therapy.</title>
        <authorList>
            <person name="Moreau A."/>
            <person name="Reisqs J.B."/>
            <person name="Delanoe-Ayari H."/>
            <person name="Pierre M."/>
            <person name="Janin A."/>
            <person name="Deliniere A."/>
            <person name="Bessiere F."/>
            <person name="Meli A.C."/>
            <person name="Charrabi A."/>
            <person name="Lafont E."/>
            <person name="Valla C."/>
            <person name="Bauer D."/>
            <person name="Morel E."/>
            <person name="Gache V."/>
            <person name="Millat G."/>
            <person name="Nissan X."/>
            <person name="Faucherre A."/>
            <person name="Jopling C."/>
            <person name="Richard S."/>
            <person name="Mejat A."/>
            <person name="Chevalier P."/>
        </authorList>
    </citation>
    <scope>VARIANT ARVD11 CYS-132</scope>
    <scope>TISSUE SPECIFICITY</scope>
</reference>